<sequence length="298" mass="31915">MKPIFRRVAVIGKYPGPGAVSASDSARQIIESIAQFVTQQDCELTLEAETAAHTGLTQYHTLDVEGIGRQCDLCLVVGGDGTMLGVGRRLAGYGTPLVGINQGRLGFITDIPLEGYQDALTPILHGDYEEDVRPLMQACVMRSGECVFEALALNDVVVNRGSTSGMVELRVEVDGVFVSNQRADGLIVASPTGSTAYALSAGGPMLHPSIPGWVLVPIAPHTLSNRPIVLSDATEVAIEVAGGRDISANFDMQSLASLQHGDRILVRRSAHRVCFLHPRGWSYFATLRKKLGWYEGGS</sequence>
<protein>
    <recommendedName>
        <fullName evidence="1">NAD kinase</fullName>
        <ecNumber evidence="1">2.7.1.23</ecNumber>
    </recommendedName>
    <alternativeName>
        <fullName evidence="1">ATP-dependent NAD kinase</fullName>
    </alternativeName>
</protein>
<evidence type="ECO:0000255" key="1">
    <source>
        <dbReference type="HAMAP-Rule" id="MF_00361"/>
    </source>
</evidence>
<gene>
    <name evidence="1" type="primary">nadK</name>
    <name type="ordered locus">Ajs_0904</name>
</gene>
<organism>
    <name type="scientific">Acidovorax sp. (strain JS42)</name>
    <dbReference type="NCBI Taxonomy" id="232721"/>
    <lineage>
        <taxon>Bacteria</taxon>
        <taxon>Pseudomonadati</taxon>
        <taxon>Pseudomonadota</taxon>
        <taxon>Betaproteobacteria</taxon>
        <taxon>Burkholderiales</taxon>
        <taxon>Comamonadaceae</taxon>
        <taxon>Acidovorax</taxon>
    </lineage>
</organism>
<proteinExistence type="inferred from homology"/>
<comment type="function">
    <text evidence="1">Involved in the regulation of the intracellular balance of NAD and NADP, and is a key enzyme in the biosynthesis of NADP. Catalyzes specifically the phosphorylation on 2'-hydroxyl of the adenosine moiety of NAD to yield NADP.</text>
</comment>
<comment type="catalytic activity">
    <reaction evidence="1">
        <text>NAD(+) + ATP = ADP + NADP(+) + H(+)</text>
        <dbReference type="Rhea" id="RHEA:18629"/>
        <dbReference type="ChEBI" id="CHEBI:15378"/>
        <dbReference type="ChEBI" id="CHEBI:30616"/>
        <dbReference type="ChEBI" id="CHEBI:57540"/>
        <dbReference type="ChEBI" id="CHEBI:58349"/>
        <dbReference type="ChEBI" id="CHEBI:456216"/>
        <dbReference type="EC" id="2.7.1.23"/>
    </reaction>
</comment>
<comment type="cofactor">
    <cofactor evidence="1">
        <name>a divalent metal cation</name>
        <dbReference type="ChEBI" id="CHEBI:60240"/>
    </cofactor>
</comment>
<comment type="subcellular location">
    <subcellularLocation>
        <location evidence="1">Cytoplasm</location>
    </subcellularLocation>
</comment>
<comment type="similarity">
    <text evidence="1">Belongs to the NAD kinase family.</text>
</comment>
<accession>A1W4H1</accession>
<keyword id="KW-0067">ATP-binding</keyword>
<keyword id="KW-0963">Cytoplasm</keyword>
<keyword id="KW-0418">Kinase</keyword>
<keyword id="KW-0520">NAD</keyword>
<keyword id="KW-0521">NADP</keyword>
<keyword id="KW-0547">Nucleotide-binding</keyword>
<keyword id="KW-0808">Transferase</keyword>
<reference key="1">
    <citation type="submission" date="2006-12" db="EMBL/GenBank/DDBJ databases">
        <title>Complete sequence of chromosome 1 of Acidovorax sp. JS42.</title>
        <authorList>
            <person name="Copeland A."/>
            <person name="Lucas S."/>
            <person name="Lapidus A."/>
            <person name="Barry K."/>
            <person name="Detter J.C."/>
            <person name="Glavina del Rio T."/>
            <person name="Dalin E."/>
            <person name="Tice H."/>
            <person name="Pitluck S."/>
            <person name="Chertkov O."/>
            <person name="Brettin T."/>
            <person name="Bruce D."/>
            <person name="Han C."/>
            <person name="Tapia R."/>
            <person name="Gilna P."/>
            <person name="Schmutz J."/>
            <person name="Larimer F."/>
            <person name="Land M."/>
            <person name="Hauser L."/>
            <person name="Kyrpides N."/>
            <person name="Kim E."/>
            <person name="Stahl D."/>
            <person name="Richardson P."/>
        </authorList>
    </citation>
    <scope>NUCLEOTIDE SEQUENCE [LARGE SCALE GENOMIC DNA]</scope>
    <source>
        <strain>JS42</strain>
    </source>
</reference>
<feature type="chain" id="PRO_1000005389" description="NAD kinase">
    <location>
        <begin position="1"/>
        <end position="298"/>
    </location>
</feature>
<feature type="active site" description="Proton acceptor" evidence="1">
    <location>
        <position position="80"/>
    </location>
</feature>
<feature type="binding site" evidence="1">
    <location>
        <begin position="80"/>
        <end position="81"/>
    </location>
    <ligand>
        <name>NAD(+)</name>
        <dbReference type="ChEBI" id="CHEBI:57540"/>
    </ligand>
</feature>
<feature type="binding site" evidence="1">
    <location>
        <begin position="154"/>
        <end position="155"/>
    </location>
    <ligand>
        <name>NAD(+)</name>
        <dbReference type="ChEBI" id="CHEBI:57540"/>
    </ligand>
</feature>
<feature type="binding site" evidence="1">
    <location>
        <position position="182"/>
    </location>
    <ligand>
        <name>NAD(+)</name>
        <dbReference type="ChEBI" id="CHEBI:57540"/>
    </ligand>
</feature>
<feature type="binding site" evidence="1">
    <location>
        <position position="184"/>
    </location>
    <ligand>
        <name>NAD(+)</name>
        <dbReference type="ChEBI" id="CHEBI:57540"/>
    </ligand>
</feature>
<feature type="binding site" evidence="1">
    <location>
        <begin position="195"/>
        <end position="200"/>
    </location>
    <ligand>
        <name>NAD(+)</name>
        <dbReference type="ChEBI" id="CHEBI:57540"/>
    </ligand>
</feature>
<feature type="binding site" evidence="1">
    <location>
        <position position="219"/>
    </location>
    <ligand>
        <name>NAD(+)</name>
        <dbReference type="ChEBI" id="CHEBI:57540"/>
    </ligand>
</feature>
<feature type="binding site" evidence="1">
    <location>
        <position position="253"/>
    </location>
    <ligand>
        <name>NAD(+)</name>
        <dbReference type="ChEBI" id="CHEBI:57540"/>
    </ligand>
</feature>
<dbReference type="EC" id="2.7.1.23" evidence="1"/>
<dbReference type="EMBL" id="CP000539">
    <property type="protein sequence ID" value="ABM41146.1"/>
    <property type="molecule type" value="Genomic_DNA"/>
</dbReference>
<dbReference type="SMR" id="A1W4H1"/>
<dbReference type="STRING" id="232721.Ajs_0904"/>
<dbReference type="KEGG" id="ajs:Ajs_0904"/>
<dbReference type="eggNOG" id="COG0061">
    <property type="taxonomic scope" value="Bacteria"/>
</dbReference>
<dbReference type="HOGENOM" id="CLU_008831_0_1_4"/>
<dbReference type="Proteomes" id="UP000000645">
    <property type="component" value="Chromosome"/>
</dbReference>
<dbReference type="GO" id="GO:0005737">
    <property type="term" value="C:cytoplasm"/>
    <property type="evidence" value="ECO:0007669"/>
    <property type="project" value="UniProtKB-SubCell"/>
</dbReference>
<dbReference type="GO" id="GO:0005524">
    <property type="term" value="F:ATP binding"/>
    <property type="evidence" value="ECO:0007669"/>
    <property type="project" value="UniProtKB-KW"/>
</dbReference>
<dbReference type="GO" id="GO:0046872">
    <property type="term" value="F:metal ion binding"/>
    <property type="evidence" value="ECO:0007669"/>
    <property type="project" value="UniProtKB-UniRule"/>
</dbReference>
<dbReference type="GO" id="GO:0051287">
    <property type="term" value="F:NAD binding"/>
    <property type="evidence" value="ECO:0007669"/>
    <property type="project" value="UniProtKB-ARBA"/>
</dbReference>
<dbReference type="GO" id="GO:0003951">
    <property type="term" value="F:NAD+ kinase activity"/>
    <property type="evidence" value="ECO:0007669"/>
    <property type="project" value="UniProtKB-UniRule"/>
</dbReference>
<dbReference type="GO" id="GO:0019674">
    <property type="term" value="P:NAD metabolic process"/>
    <property type="evidence" value="ECO:0007669"/>
    <property type="project" value="InterPro"/>
</dbReference>
<dbReference type="GO" id="GO:0006741">
    <property type="term" value="P:NADP biosynthetic process"/>
    <property type="evidence" value="ECO:0007669"/>
    <property type="project" value="UniProtKB-UniRule"/>
</dbReference>
<dbReference type="Gene3D" id="3.40.50.10330">
    <property type="entry name" value="Probable inorganic polyphosphate/atp-NAD kinase, domain 1"/>
    <property type="match status" value="1"/>
</dbReference>
<dbReference type="Gene3D" id="2.60.200.30">
    <property type="entry name" value="Probable inorganic polyphosphate/atp-NAD kinase, domain 2"/>
    <property type="match status" value="1"/>
</dbReference>
<dbReference type="HAMAP" id="MF_00361">
    <property type="entry name" value="NAD_kinase"/>
    <property type="match status" value="1"/>
</dbReference>
<dbReference type="InterPro" id="IPR017438">
    <property type="entry name" value="ATP-NAD_kinase_N"/>
</dbReference>
<dbReference type="InterPro" id="IPR017437">
    <property type="entry name" value="ATP-NAD_kinase_PpnK-typ_C"/>
</dbReference>
<dbReference type="InterPro" id="IPR016064">
    <property type="entry name" value="NAD/diacylglycerol_kinase_sf"/>
</dbReference>
<dbReference type="InterPro" id="IPR002504">
    <property type="entry name" value="NADK"/>
</dbReference>
<dbReference type="NCBIfam" id="NF002561">
    <property type="entry name" value="PRK02155.1"/>
    <property type="match status" value="1"/>
</dbReference>
<dbReference type="PANTHER" id="PTHR20275">
    <property type="entry name" value="NAD KINASE"/>
    <property type="match status" value="1"/>
</dbReference>
<dbReference type="PANTHER" id="PTHR20275:SF0">
    <property type="entry name" value="NAD KINASE"/>
    <property type="match status" value="1"/>
</dbReference>
<dbReference type="Pfam" id="PF01513">
    <property type="entry name" value="NAD_kinase"/>
    <property type="match status" value="1"/>
</dbReference>
<dbReference type="Pfam" id="PF20143">
    <property type="entry name" value="NAD_kinase_C"/>
    <property type="match status" value="1"/>
</dbReference>
<dbReference type="SUPFAM" id="SSF111331">
    <property type="entry name" value="NAD kinase/diacylglycerol kinase-like"/>
    <property type="match status" value="1"/>
</dbReference>
<name>NADK_ACISJ</name>